<keyword id="KW-0002">3D-structure</keyword>
<keyword id="KW-0025">Alternative splicing</keyword>
<keyword id="KW-1003">Cell membrane</keyword>
<keyword id="KW-0967">Endosome</keyword>
<keyword id="KW-0325">Glycoprotein</keyword>
<keyword id="KW-0342">GTP-binding</keyword>
<keyword id="KW-0378">Hydrolase</keyword>
<keyword id="KW-0449">Lipoprotein</keyword>
<keyword id="KW-0460">Magnesium</keyword>
<keyword id="KW-0472">Membrane</keyword>
<keyword id="KW-0479">Metal-binding</keyword>
<keyword id="KW-0547">Nucleotide-binding</keyword>
<keyword id="KW-0597">Phosphoprotein</keyword>
<keyword id="KW-0636">Prenylation</keyword>
<keyword id="KW-0653">Protein transport</keyword>
<keyword id="KW-1267">Proteomics identification</keyword>
<keyword id="KW-1185">Reference proteome</keyword>
<keyword id="KW-0813">Transport</keyword>
<sequence length="216" mass="23483">MAGRGGAARPNGPAAGNKICQFKLVLLGESAVGKSSLVLRFVKGQFHEYQESTIGAAFLTQTVCLDDTTVKFEIWDTAGQERYHSLAPMYYRGAQAAIVVYDITNTDTFARAKNWVKELQRQASPNIVIALAGNKADLASKRAVEFQEAQAYADDNSLLFMETSAKTAMNVNEIFMAIAKKLPKNEPQNATGAPGRNRGVDLQENNPASRSQCCSN</sequence>
<accession>P51148</accession>
<accession>F8W1H5</accession>
<accession>Q6FH55</accession>
<accession>Q9P0Y5</accession>
<comment type="function">
    <text evidence="1">The small GTPases Rab are key regulators of intracellular membrane trafficking, from the formation of transport vesicles to their fusion with membranes. Rabs cycle between an inactive GDP-bound form and an active GTP-bound form that is able to recruit to membranes different sets of downstream effectors directly responsible for vesicle formation, movement, tethering and fusion.</text>
</comment>
<comment type="catalytic activity">
    <reaction evidence="1">
        <text>GTP + H2O = GDP + phosphate + H(+)</text>
        <dbReference type="Rhea" id="RHEA:19669"/>
        <dbReference type="ChEBI" id="CHEBI:15377"/>
        <dbReference type="ChEBI" id="CHEBI:15378"/>
        <dbReference type="ChEBI" id="CHEBI:37565"/>
        <dbReference type="ChEBI" id="CHEBI:43474"/>
        <dbReference type="ChEBI" id="CHEBI:58189"/>
        <dbReference type="EC" id="3.6.5.2"/>
    </reaction>
    <physiologicalReaction direction="left-to-right" evidence="1">
        <dbReference type="Rhea" id="RHEA:19670"/>
    </physiologicalReaction>
</comment>
<comment type="cofactor">
    <cofactor evidence="1">
        <name>Mg(2+)</name>
        <dbReference type="ChEBI" id="CHEBI:18420"/>
    </cofactor>
</comment>
<comment type="activity regulation">
    <text evidence="10">Regulated by guanine nucleotide exchange factors (GEFs) which promote the exchange of bound GDP for free GTP (Probable). Regulated by GTPase activating proteins (GAPs) which increase the GTP hydrolysis activity (Probable). Inhibited by GDP dissociation inhibitors (GDIs) (Probable).</text>
</comment>
<comment type="subunit">
    <text evidence="3 6 7">Interacts with EEA1 (PubMed:12493736). Interacts with INCA1 (PubMed:21750715). Interacts with GDI1, GDI2, CHML and CHM; phosphorylation at Ser-85 disrupts this interaction (PubMed:29125462).</text>
</comment>
<comment type="interaction">
    <interactant intactId="EBI-1054923">
        <id>P51148</id>
    </interactant>
    <interactant intactId="EBI-12078276">
        <id>Q60I27</id>
        <label>ALS2CL</label>
    </interactant>
    <organismsDiffer>false</organismsDiffer>
    <experiments>3</experiments>
</comment>
<comment type="interaction">
    <interactant intactId="EBI-1054923">
        <id>P51148</id>
    </interactant>
    <interactant intactId="EBI-741261">
        <id>Q8NEU8</id>
        <label>APPL2</label>
    </interactant>
    <organismsDiffer>false</organismsDiffer>
    <experiments>8</experiments>
</comment>
<comment type="interaction">
    <interactant intactId="EBI-1054923">
        <id>P51148</id>
    </interactant>
    <interactant intactId="EBI-298113">
        <id>Q15075</id>
        <label>EEA1</label>
    </interactant>
    <organismsDiffer>false</organismsDiffer>
    <experiments>3</experiments>
</comment>
<comment type="interaction">
    <interactant intactId="EBI-1054923">
        <id>P51148</id>
    </interactant>
    <interactant intactId="EBI-6509505">
        <id>Q0VD86</id>
        <label>INCA1</label>
    </interactant>
    <organismsDiffer>false</organismsDiffer>
    <experiments>2</experiments>
</comment>
<comment type="interaction">
    <interactant intactId="EBI-1054923">
        <id>P51148</id>
    </interactant>
    <interactant intactId="EBI-26364295">
        <id>Q5ZRP9</id>
        <label>vipD</label>
    </interactant>
    <organismsDiffer>true</organismsDiffer>
    <experiments>7</experiments>
</comment>
<comment type="subcellular location">
    <subcellularLocation>
        <location evidence="1">Cell membrane</location>
        <topology evidence="1">Lipid-anchor</topology>
        <orientation evidence="1">Cytoplasmic side</orientation>
    </subcellularLocation>
    <subcellularLocation>
        <location evidence="1">Early endosome membrane</location>
        <topology evidence="1">Lipid-anchor</topology>
    </subcellularLocation>
    <subcellularLocation>
        <location evidence="5">Melanosome</location>
    </subcellularLocation>
    <text evidence="5">Identified by mass spectrometry in melanosome fractions from stage I to stage IV.</text>
</comment>
<comment type="alternative products">
    <event type="alternative splicing"/>
    <isoform>
        <id>P51148-1</id>
        <name>1</name>
        <sequence type="displayed"/>
    </isoform>
    <isoform>
        <id>P51148-2</id>
        <name>2</name>
        <sequence type="described" ref="VSP_046035"/>
    </isoform>
</comment>
<comment type="domain">
    <text evidence="1">Switch 1, switch 2 and the interswitch regions are characteristic of Rab GTPases and mediate the interactions with Rab downstream effectors. The switch regions undergo conformational changes upon nucleotide binding which drive interaction with specific sets of effector proteins, with most effectors only binding to GTP-bound Rab.</text>
</comment>
<comment type="PTM">
    <text evidence="7">Phosphorylation of Ser-85 in the switch II region by LRRK2 prevents the association of RAB regulatory proteins, including CHM, CHML and RAB GDP dissociation inhibitors GDI1 and GDI2.</text>
</comment>
<comment type="PTM">
    <text evidence="8">(Microbial infection) Glycosylated on arginine residues by S.typhimurium protein Ssek3.</text>
</comment>
<comment type="similarity">
    <text evidence="10">Belongs to the small GTPase superfamily. Rab family.</text>
</comment>
<name>RAB5C_HUMAN</name>
<gene>
    <name evidence="11" type="primary">RAB5C</name>
    <name type="synonym">RABL</name>
</gene>
<proteinExistence type="evidence at protein level"/>
<reference key="1">
    <citation type="journal article" date="1996" name="Cytogenet. Cell Genet.">
        <title>Isolation and mapping of a human gene (RABL) encoding a small GTP-binding protein homologous to the Ras-related RAB gene.</title>
        <authorList>
            <person name="Han H.J."/>
            <person name="Sudo K."/>
            <person name="Inazawa J."/>
            <person name="Nakamura Y."/>
        </authorList>
    </citation>
    <scope>NUCLEOTIDE SEQUENCE [MRNA] (ISOFORM 1)</scope>
</reference>
<reference key="2">
    <citation type="journal article" date="1994" name="Nat. Genet.">
        <title>A physical map and candidate genes in the BRCA1 region on chromosome 17q12-21.</title>
        <authorList>
            <person name="Albertsen H.M."/>
            <person name="Smith S.A."/>
            <person name="Mazoyer S."/>
            <person name="Fujimoto E."/>
            <person name="Stevens J."/>
            <person name="Williams B."/>
            <person name="Rodriguez P."/>
            <person name="Cropp C.S."/>
            <person name="Slijepcevic P."/>
            <person name="Carlson M."/>
            <person name="Robertson M."/>
            <person name="Bradley P."/>
            <person name="Lawrence E."/>
            <person name="Harrington T."/>
            <person name="Sheng Z.M."/>
            <person name="Hoopes R."/>
            <person name="Sternberg N."/>
            <person name="Brothman A."/>
            <person name="Callahan R."/>
            <person name="Ponder B.A.J."/>
            <person name="White R."/>
        </authorList>
    </citation>
    <scope>NUCLEOTIDE SEQUENCE [MRNA] (ISOFORM 1)</scope>
</reference>
<reference key="3">
    <citation type="journal article" date="2000" name="Infect. Immun.">
        <title>Deviant expression of Rab5 on phagosomes containing the intracellular pathogens Mycobacterium tuberculosis and Legionella pneumophila is associated with altered phagosomal fate.</title>
        <authorList>
            <person name="Clemens D.L."/>
            <person name="Lee B.-Y."/>
            <person name="Horwitz M.A."/>
        </authorList>
    </citation>
    <scope>NUCLEOTIDE SEQUENCE [MRNA] (ISOFORM 1)</scope>
    <source>
        <tissue>Lung</tissue>
    </source>
</reference>
<reference key="4">
    <citation type="submission" date="2002-04" db="EMBL/GenBank/DDBJ databases">
        <title>cDNA clones of human proteins involved in signal transduction sequenced by the Guthrie cDNA resource center (www.cdna.org).</title>
        <authorList>
            <person name="Puhl H.L. III"/>
            <person name="Ikeda S.R."/>
            <person name="Aronstam R.S."/>
        </authorList>
    </citation>
    <scope>NUCLEOTIDE SEQUENCE [LARGE SCALE MRNA] (ISOFORM 1)</scope>
    <source>
        <tissue>Brain</tissue>
    </source>
</reference>
<reference key="5">
    <citation type="journal article" date="2004" name="Nat. Genet.">
        <title>Complete sequencing and characterization of 21,243 full-length human cDNAs.</title>
        <authorList>
            <person name="Ota T."/>
            <person name="Suzuki Y."/>
            <person name="Nishikawa T."/>
            <person name="Otsuki T."/>
            <person name="Sugiyama T."/>
            <person name="Irie R."/>
            <person name="Wakamatsu A."/>
            <person name="Hayashi K."/>
            <person name="Sato H."/>
            <person name="Nagai K."/>
            <person name="Kimura K."/>
            <person name="Makita H."/>
            <person name="Sekine M."/>
            <person name="Obayashi M."/>
            <person name="Nishi T."/>
            <person name="Shibahara T."/>
            <person name="Tanaka T."/>
            <person name="Ishii S."/>
            <person name="Yamamoto J."/>
            <person name="Saito K."/>
            <person name="Kawai Y."/>
            <person name="Isono Y."/>
            <person name="Nakamura Y."/>
            <person name="Nagahari K."/>
            <person name="Murakami K."/>
            <person name="Yasuda T."/>
            <person name="Iwayanagi T."/>
            <person name="Wagatsuma M."/>
            <person name="Shiratori A."/>
            <person name="Sudo H."/>
            <person name="Hosoiri T."/>
            <person name="Kaku Y."/>
            <person name="Kodaira H."/>
            <person name="Kondo H."/>
            <person name="Sugawara M."/>
            <person name="Takahashi M."/>
            <person name="Kanda K."/>
            <person name="Yokoi T."/>
            <person name="Furuya T."/>
            <person name="Kikkawa E."/>
            <person name="Omura Y."/>
            <person name="Abe K."/>
            <person name="Kamihara K."/>
            <person name="Katsuta N."/>
            <person name="Sato K."/>
            <person name="Tanikawa M."/>
            <person name="Yamazaki M."/>
            <person name="Ninomiya K."/>
            <person name="Ishibashi T."/>
            <person name="Yamashita H."/>
            <person name="Murakawa K."/>
            <person name="Fujimori K."/>
            <person name="Tanai H."/>
            <person name="Kimata M."/>
            <person name="Watanabe M."/>
            <person name="Hiraoka S."/>
            <person name="Chiba Y."/>
            <person name="Ishida S."/>
            <person name="Ono Y."/>
            <person name="Takiguchi S."/>
            <person name="Watanabe S."/>
            <person name="Yosida M."/>
            <person name="Hotuta T."/>
            <person name="Kusano J."/>
            <person name="Kanehori K."/>
            <person name="Takahashi-Fujii A."/>
            <person name="Hara H."/>
            <person name="Tanase T.-O."/>
            <person name="Nomura Y."/>
            <person name="Togiya S."/>
            <person name="Komai F."/>
            <person name="Hara R."/>
            <person name="Takeuchi K."/>
            <person name="Arita M."/>
            <person name="Imose N."/>
            <person name="Musashino K."/>
            <person name="Yuuki H."/>
            <person name="Oshima A."/>
            <person name="Sasaki N."/>
            <person name="Aotsuka S."/>
            <person name="Yoshikawa Y."/>
            <person name="Matsunawa H."/>
            <person name="Ichihara T."/>
            <person name="Shiohata N."/>
            <person name="Sano S."/>
            <person name="Moriya S."/>
            <person name="Momiyama H."/>
            <person name="Satoh N."/>
            <person name="Takami S."/>
            <person name="Terashima Y."/>
            <person name="Suzuki O."/>
            <person name="Nakagawa S."/>
            <person name="Senoh A."/>
            <person name="Mizoguchi H."/>
            <person name="Goto Y."/>
            <person name="Shimizu F."/>
            <person name="Wakebe H."/>
            <person name="Hishigaki H."/>
            <person name="Watanabe T."/>
            <person name="Sugiyama A."/>
            <person name="Takemoto M."/>
            <person name="Kawakami B."/>
            <person name="Yamazaki M."/>
            <person name="Watanabe K."/>
            <person name="Kumagai A."/>
            <person name="Itakura S."/>
            <person name="Fukuzumi Y."/>
            <person name="Fujimori Y."/>
            <person name="Komiyama M."/>
            <person name="Tashiro H."/>
            <person name="Tanigami A."/>
            <person name="Fujiwara T."/>
            <person name="Ono T."/>
            <person name="Yamada K."/>
            <person name="Fujii Y."/>
            <person name="Ozaki K."/>
            <person name="Hirao M."/>
            <person name="Ohmori Y."/>
            <person name="Kawabata A."/>
            <person name="Hikiji T."/>
            <person name="Kobatake N."/>
            <person name="Inagaki H."/>
            <person name="Ikema Y."/>
            <person name="Okamoto S."/>
            <person name="Okitani R."/>
            <person name="Kawakami T."/>
            <person name="Noguchi S."/>
            <person name="Itoh T."/>
            <person name="Shigeta K."/>
            <person name="Senba T."/>
            <person name="Matsumura K."/>
            <person name="Nakajima Y."/>
            <person name="Mizuno T."/>
            <person name="Morinaga M."/>
            <person name="Sasaki M."/>
            <person name="Togashi T."/>
            <person name="Oyama M."/>
            <person name="Hata H."/>
            <person name="Watanabe M."/>
            <person name="Komatsu T."/>
            <person name="Mizushima-Sugano J."/>
            <person name="Satoh T."/>
            <person name="Shirai Y."/>
            <person name="Takahashi Y."/>
            <person name="Nakagawa K."/>
            <person name="Okumura K."/>
            <person name="Nagase T."/>
            <person name="Nomura N."/>
            <person name="Kikuchi H."/>
            <person name="Masuho Y."/>
            <person name="Yamashita R."/>
            <person name="Nakai K."/>
            <person name="Yada T."/>
            <person name="Nakamura Y."/>
            <person name="Ohara O."/>
            <person name="Isogai T."/>
            <person name="Sugano S."/>
        </authorList>
    </citation>
    <scope>NUCLEOTIDE SEQUENCE [LARGE SCALE MRNA] (ISOFORM 2)</scope>
    <source>
        <tissue>Testis</tissue>
    </source>
</reference>
<reference key="6">
    <citation type="submission" date="2004-06" db="EMBL/GenBank/DDBJ databases">
        <title>Cloning of human full open reading frames in Gateway(TM) system entry vector (pDONR201).</title>
        <authorList>
            <person name="Ebert L."/>
            <person name="Schick M."/>
            <person name="Neubert P."/>
            <person name="Schatten R."/>
            <person name="Henze S."/>
            <person name="Korn B."/>
        </authorList>
    </citation>
    <scope>NUCLEOTIDE SEQUENCE [LARGE SCALE MRNA] (ISOFORM 1)</scope>
</reference>
<reference key="7">
    <citation type="submission" date="2004-10" db="EMBL/GenBank/DDBJ databases">
        <title>Cloning of human full-length CDSs in BD Creator(TM) system donor vector.</title>
        <authorList>
            <person name="Kalnine N."/>
            <person name="Chen X."/>
            <person name="Rolfs A."/>
            <person name="Halleck A."/>
            <person name="Hines L."/>
            <person name="Eisenstein S."/>
            <person name="Koundinya M."/>
            <person name="Raphael J."/>
            <person name="Moreira D."/>
            <person name="Kelley T."/>
            <person name="LaBaer J."/>
            <person name="Lin Y."/>
            <person name="Phelan M."/>
            <person name="Farmer A."/>
        </authorList>
    </citation>
    <scope>NUCLEOTIDE SEQUENCE [LARGE SCALE MRNA] (ISOFORM 1)</scope>
</reference>
<reference key="8">
    <citation type="journal article" date="2006" name="Nature">
        <title>DNA sequence of human chromosome 17 and analysis of rearrangement in the human lineage.</title>
        <authorList>
            <person name="Zody M.C."/>
            <person name="Garber M."/>
            <person name="Adams D.J."/>
            <person name="Sharpe T."/>
            <person name="Harrow J."/>
            <person name="Lupski J.R."/>
            <person name="Nicholson C."/>
            <person name="Searle S.M."/>
            <person name="Wilming L."/>
            <person name="Young S.K."/>
            <person name="Abouelleil A."/>
            <person name="Allen N.R."/>
            <person name="Bi W."/>
            <person name="Bloom T."/>
            <person name="Borowsky M.L."/>
            <person name="Bugalter B.E."/>
            <person name="Butler J."/>
            <person name="Chang J.L."/>
            <person name="Chen C.-K."/>
            <person name="Cook A."/>
            <person name="Corum B."/>
            <person name="Cuomo C.A."/>
            <person name="de Jong P.J."/>
            <person name="DeCaprio D."/>
            <person name="Dewar K."/>
            <person name="FitzGerald M."/>
            <person name="Gilbert J."/>
            <person name="Gibson R."/>
            <person name="Gnerre S."/>
            <person name="Goldstein S."/>
            <person name="Grafham D.V."/>
            <person name="Grocock R."/>
            <person name="Hafez N."/>
            <person name="Hagopian D.S."/>
            <person name="Hart E."/>
            <person name="Norman C.H."/>
            <person name="Humphray S."/>
            <person name="Jaffe D.B."/>
            <person name="Jones M."/>
            <person name="Kamal M."/>
            <person name="Khodiyar V.K."/>
            <person name="LaButti K."/>
            <person name="Laird G."/>
            <person name="Lehoczky J."/>
            <person name="Liu X."/>
            <person name="Lokyitsang T."/>
            <person name="Loveland J."/>
            <person name="Lui A."/>
            <person name="Macdonald P."/>
            <person name="Major J.E."/>
            <person name="Matthews L."/>
            <person name="Mauceli E."/>
            <person name="McCarroll S.A."/>
            <person name="Mihalev A.H."/>
            <person name="Mudge J."/>
            <person name="Nguyen C."/>
            <person name="Nicol R."/>
            <person name="O'Leary S.B."/>
            <person name="Osoegawa K."/>
            <person name="Schwartz D.C."/>
            <person name="Shaw-Smith C."/>
            <person name="Stankiewicz P."/>
            <person name="Steward C."/>
            <person name="Swarbreck D."/>
            <person name="Venkataraman V."/>
            <person name="Whittaker C.A."/>
            <person name="Yang X."/>
            <person name="Zimmer A.R."/>
            <person name="Bradley A."/>
            <person name="Hubbard T."/>
            <person name="Birren B.W."/>
            <person name="Rogers J."/>
            <person name="Lander E.S."/>
            <person name="Nusbaum C."/>
        </authorList>
    </citation>
    <scope>NUCLEOTIDE SEQUENCE [LARGE SCALE GENOMIC DNA]</scope>
</reference>
<reference key="9">
    <citation type="submission" date="2005-07" db="EMBL/GenBank/DDBJ databases">
        <authorList>
            <person name="Mural R.J."/>
            <person name="Istrail S."/>
            <person name="Sutton G.G."/>
            <person name="Florea L."/>
            <person name="Halpern A.L."/>
            <person name="Mobarry C.M."/>
            <person name="Lippert R."/>
            <person name="Walenz B."/>
            <person name="Shatkay H."/>
            <person name="Dew I."/>
            <person name="Miller J.R."/>
            <person name="Flanigan M.J."/>
            <person name="Edwards N.J."/>
            <person name="Bolanos R."/>
            <person name="Fasulo D."/>
            <person name="Halldorsson B.V."/>
            <person name="Hannenhalli S."/>
            <person name="Turner R."/>
            <person name="Yooseph S."/>
            <person name="Lu F."/>
            <person name="Nusskern D.R."/>
            <person name="Shue B.C."/>
            <person name="Zheng X.H."/>
            <person name="Zhong F."/>
            <person name="Delcher A.L."/>
            <person name="Huson D.H."/>
            <person name="Kravitz S.A."/>
            <person name="Mouchard L."/>
            <person name="Reinert K."/>
            <person name="Remington K.A."/>
            <person name="Clark A.G."/>
            <person name="Waterman M.S."/>
            <person name="Eichler E.E."/>
            <person name="Adams M.D."/>
            <person name="Hunkapiller M.W."/>
            <person name="Myers E.W."/>
            <person name="Venter J.C."/>
        </authorList>
    </citation>
    <scope>NUCLEOTIDE SEQUENCE [LARGE SCALE GENOMIC DNA]</scope>
</reference>
<reference key="10">
    <citation type="journal article" date="2004" name="Genome Res.">
        <title>The status, quality, and expansion of the NIH full-length cDNA project: the Mammalian Gene Collection (MGC).</title>
        <authorList>
            <consortium name="The MGC Project Team"/>
        </authorList>
    </citation>
    <scope>NUCLEOTIDE SEQUENCE [LARGE SCALE MRNA] (ISOFORM 1)</scope>
    <source>
        <tissue>Brain</tissue>
    </source>
</reference>
<reference key="11">
    <citation type="journal article" date="2003" name="J. Biol. Chem.">
        <title>Determinants of Rab5 interaction with the N-terminus of early endosome antigen 1.</title>
        <authorList>
            <person name="Merithew E."/>
            <person name="Stone C."/>
            <person name="Eathiraj S."/>
            <person name="Lambright D.G."/>
        </authorList>
    </citation>
    <scope>INTERACTION WITH EEA1</scope>
</reference>
<reference key="12">
    <citation type="journal article" date="2006" name="J. Proteome Res.">
        <title>Proteomic and bioinformatic characterization of the biogenesis and function of melanosomes.</title>
        <authorList>
            <person name="Chi A."/>
            <person name="Valencia J.C."/>
            <person name="Hu Z.-Z."/>
            <person name="Watabe H."/>
            <person name="Yamaguchi H."/>
            <person name="Mangini N.J."/>
            <person name="Huang H."/>
            <person name="Canfield V.A."/>
            <person name="Cheng K.C."/>
            <person name="Yang F."/>
            <person name="Abe R."/>
            <person name="Yamagishi S."/>
            <person name="Shabanowitz J."/>
            <person name="Hearing V.J."/>
            <person name="Wu C."/>
            <person name="Appella E."/>
            <person name="Hunt D.F."/>
        </authorList>
    </citation>
    <scope>SUBCELLULAR LOCATION [LARGE SCALE ANALYSIS]</scope>
    <source>
        <tissue>Melanoma</tissue>
    </source>
</reference>
<reference key="13">
    <citation type="journal article" date="2011" name="BMC Syst. Biol.">
        <title>Initial characterization of the human central proteome.</title>
        <authorList>
            <person name="Burkard T.R."/>
            <person name="Planyavsky M."/>
            <person name="Kaupe I."/>
            <person name="Breitwieser F.P."/>
            <person name="Buerckstuemmer T."/>
            <person name="Bennett K.L."/>
            <person name="Superti-Furga G."/>
            <person name="Colinge J."/>
        </authorList>
    </citation>
    <scope>IDENTIFICATION BY MASS SPECTROMETRY [LARGE SCALE ANALYSIS]</scope>
</reference>
<reference key="14">
    <citation type="journal article" date="2011" name="PLoS ONE">
        <title>The inhibitor of growth protein 5 (ING5) depends on INCA1 as a co-factor for its antiproliferative effects.</title>
        <authorList>
            <person name="Zhang F."/>
            <person name="Baeumer N."/>
            <person name="Rode M."/>
            <person name="Ji P."/>
            <person name="Zhang T."/>
            <person name="Berdel W.E."/>
            <person name="Mueller-Tidow C."/>
        </authorList>
    </citation>
    <scope>INTERACTION WITH INCA1</scope>
</reference>
<reference key="15">
    <citation type="journal article" date="2015" name="Proteomics">
        <title>N-terminome analysis of the human mitochondrial proteome.</title>
        <authorList>
            <person name="Vaca Jacome A.S."/>
            <person name="Rabilloud T."/>
            <person name="Schaeffer-Reiss C."/>
            <person name="Rompais M."/>
            <person name="Ayoub D."/>
            <person name="Lane L."/>
            <person name="Bairoch A."/>
            <person name="Van Dorsselaer A."/>
            <person name="Carapito C."/>
        </authorList>
    </citation>
    <scope>IDENTIFICATION BY MASS SPECTROMETRY [LARGE SCALE ANALYSIS]</scope>
</reference>
<reference key="16">
    <citation type="journal article" date="2017" name="Elife">
        <title>Systematic proteomic analysis of LRRK2-mediated Rab GTPase phosphorylation establishes a connection to ciliogenesis.</title>
        <authorList>
            <person name="Steger M."/>
            <person name="Diez F."/>
            <person name="Dhekne H.S."/>
            <person name="Lis P."/>
            <person name="Nirujogi R.S."/>
            <person name="Karayel O."/>
            <person name="Tonelli F."/>
            <person name="Martinez T.N."/>
            <person name="Lorentzen E."/>
            <person name="Pfeffer S.R."/>
            <person name="Alessi D.R."/>
            <person name="Mann M."/>
        </authorList>
    </citation>
    <scope>INTERACTION WITH GDI1; GDI2; CHML AND CHM</scope>
    <scope>PHOSPHORYLATION AT SER-85</scope>
    <scope>MUTAGENESIS OF SER-85</scope>
</reference>
<reference key="17">
    <citation type="journal article" date="2020" name="Front. Cell. Infect. Microbiol.">
        <title>The Salmonella effector SseK3 targets small Rab GTPases.</title>
        <authorList>
            <person name="Gan J."/>
            <person name="Scott N.E."/>
            <person name="Newson J.P.M."/>
            <person name="Wibawa R.R."/>
            <person name="Wong Fok Lung T."/>
            <person name="Pollock G.L."/>
            <person name="Ng G.Z."/>
            <person name="van Driel I."/>
            <person name="Pearson J.S."/>
            <person name="Hartland E.L."/>
            <person name="Giogha C."/>
        </authorList>
    </citation>
    <scope>GLYCOSYLATION (MICROBIAL INFECTION)</scope>
</reference>
<reference key="18">
    <citation type="journal article" date="2006" name="Science">
        <title>The consensus coding sequences of human breast and colorectal cancers.</title>
        <authorList>
            <person name="Sjoeblom T."/>
            <person name="Jones S."/>
            <person name="Wood L.D."/>
            <person name="Parsons D.W."/>
            <person name="Lin J."/>
            <person name="Barber T.D."/>
            <person name="Mandelker D."/>
            <person name="Leary R.J."/>
            <person name="Ptak J."/>
            <person name="Silliman N."/>
            <person name="Szabo S."/>
            <person name="Buckhaults P."/>
            <person name="Farrell C."/>
            <person name="Meeh P."/>
            <person name="Markowitz S.D."/>
            <person name="Willis J."/>
            <person name="Dawson D."/>
            <person name="Willson J.K.V."/>
            <person name="Gazdar A.F."/>
            <person name="Hartigan J."/>
            <person name="Wu L."/>
            <person name="Liu C."/>
            <person name="Parmigiani G."/>
            <person name="Park B.H."/>
            <person name="Bachman K.E."/>
            <person name="Papadopoulos N."/>
            <person name="Vogelstein B."/>
            <person name="Kinzler K.W."/>
            <person name="Velculescu V.E."/>
        </authorList>
    </citation>
    <scope>VARIANT [LARGE SCALE ANALYSIS] HIS-40</scope>
</reference>
<feature type="chain" id="PRO_0000121110" description="Ras-related protein Rab-5C">
    <location>
        <begin position="1"/>
        <end position="216"/>
    </location>
</feature>
<feature type="region of interest" description="Disordered" evidence="2">
    <location>
        <begin position="185"/>
        <end position="216"/>
    </location>
</feature>
<feature type="short sequence motif" description="Switch 1" evidence="1">
    <location>
        <begin position="45"/>
        <end position="57"/>
    </location>
</feature>
<feature type="short sequence motif" description="Switch 2" evidence="1">
    <location>
        <begin position="78"/>
        <end position="94"/>
    </location>
</feature>
<feature type="compositionally biased region" description="Polar residues" evidence="2">
    <location>
        <begin position="203"/>
        <end position="216"/>
    </location>
</feature>
<feature type="binding site" evidence="1">
    <location>
        <position position="30"/>
    </location>
    <ligand>
        <name>GTP</name>
        <dbReference type="ChEBI" id="CHEBI:37565"/>
    </ligand>
</feature>
<feature type="binding site" evidence="1">
    <location>
        <position position="31"/>
    </location>
    <ligand>
        <name>GTP</name>
        <dbReference type="ChEBI" id="CHEBI:37565"/>
    </ligand>
</feature>
<feature type="binding site" evidence="1">
    <location>
        <position position="33"/>
    </location>
    <ligand>
        <name>GTP</name>
        <dbReference type="ChEBI" id="CHEBI:37565"/>
    </ligand>
</feature>
<feature type="binding site" evidence="1">
    <location>
        <position position="34"/>
    </location>
    <ligand>
        <name>GTP</name>
        <dbReference type="ChEBI" id="CHEBI:37565"/>
    </ligand>
</feature>
<feature type="binding site" evidence="1">
    <location>
        <position position="35"/>
    </location>
    <ligand>
        <name>GTP</name>
        <dbReference type="ChEBI" id="CHEBI:37565"/>
    </ligand>
</feature>
<feature type="binding site" evidence="1">
    <location>
        <position position="35"/>
    </location>
    <ligand>
        <name>Mg(2+)</name>
        <dbReference type="ChEBI" id="CHEBI:18420"/>
    </ligand>
</feature>
<feature type="binding site" evidence="1">
    <location>
        <position position="36"/>
    </location>
    <ligand>
        <name>GTP</name>
        <dbReference type="ChEBI" id="CHEBI:37565"/>
    </ligand>
</feature>
<feature type="binding site" evidence="1">
    <location>
        <position position="47"/>
    </location>
    <ligand>
        <name>GTP</name>
        <dbReference type="ChEBI" id="CHEBI:37565"/>
    </ligand>
</feature>
<feature type="binding site" evidence="1">
    <location>
        <position position="48"/>
    </location>
    <ligand>
        <name>GTP</name>
        <dbReference type="ChEBI" id="CHEBI:37565"/>
    </ligand>
</feature>
<feature type="binding site" evidence="1">
    <location>
        <position position="53"/>
    </location>
    <ligand>
        <name>GTP</name>
        <dbReference type="ChEBI" id="CHEBI:37565"/>
    </ligand>
</feature>
<feature type="binding site" evidence="1">
    <location>
        <position position="53"/>
    </location>
    <ligand>
        <name>Mg(2+)</name>
        <dbReference type="ChEBI" id="CHEBI:18420"/>
    </ligand>
</feature>
<feature type="binding site" evidence="1">
    <location>
        <position position="79"/>
    </location>
    <ligand>
        <name>GTP</name>
        <dbReference type="ChEBI" id="CHEBI:37565"/>
    </ligand>
</feature>
<feature type="binding site" evidence="1">
    <location>
        <position position="134"/>
    </location>
    <ligand>
        <name>GTP</name>
        <dbReference type="ChEBI" id="CHEBI:37565"/>
    </ligand>
</feature>
<feature type="binding site" evidence="1">
    <location>
        <position position="135"/>
    </location>
    <ligand>
        <name>GTP</name>
        <dbReference type="ChEBI" id="CHEBI:37565"/>
    </ligand>
</feature>
<feature type="binding site" evidence="1">
    <location>
        <position position="137"/>
    </location>
    <ligand>
        <name>GTP</name>
        <dbReference type="ChEBI" id="CHEBI:37565"/>
    </ligand>
</feature>
<feature type="binding site" evidence="1">
    <location>
        <position position="165"/>
    </location>
    <ligand>
        <name>GTP</name>
        <dbReference type="ChEBI" id="CHEBI:37565"/>
    </ligand>
</feature>
<feature type="binding site" evidence="1">
    <location>
        <position position="166"/>
    </location>
    <ligand>
        <name>GTP</name>
        <dbReference type="ChEBI" id="CHEBI:37565"/>
    </ligand>
</feature>
<feature type="modified residue" description="Phosphoserine; by LRRK2" evidence="7">
    <location>
        <position position="85"/>
    </location>
</feature>
<feature type="lipid moiety-binding region" description="S-geranylgeranyl cysteine" evidence="1">
    <location>
        <position position="213"/>
    </location>
</feature>
<feature type="lipid moiety-binding region" description="S-geranylgeranyl cysteine" evidence="1">
    <location>
        <position position="214"/>
    </location>
</feature>
<feature type="splice variant" id="VSP_046035" description="In isoform 2." evidence="9">
    <original>M</original>
    <variation>MELSWRSPSPLSASLHSTSPHPHALWTTTAGRAM</variation>
    <location>
        <position position="1"/>
    </location>
</feature>
<feature type="sequence variant" id="VAR_036414" description="In a colorectal cancer sample; somatic mutation; dbSNP:rs1280509335." evidence="4">
    <original>R</original>
    <variation>H</variation>
    <location>
        <position position="40"/>
    </location>
</feature>
<feature type="mutagenesis site" description="Loss of phosphorylation. No effect on GDI1, GDI2, CHML and CHM binding." evidence="7">
    <original>S</original>
    <variation>A</variation>
    <location>
        <position position="85"/>
    </location>
</feature>
<feature type="mutagenesis site" description="Phosphomimetic mutant. Loss of GDI1, GDI2, CHML and CHM binding." evidence="7">
    <original>S</original>
    <variation>E</variation>
    <location>
        <position position="85"/>
    </location>
</feature>
<feature type="sequence conflict" description="In Ref. 1 and 2." evidence="10" ref="1 2">
    <original>A</original>
    <variation>R</variation>
    <location>
        <position position="8"/>
    </location>
</feature>
<feature type="strand" evidence="12">
    <location>
        <begin position="20"/>
        <end position="27"/>
    </location>
</feature>
<feature type="helix" evidence="12">
    <location>
        <begin position="34"/>
        <end position="41"/>
    </location>
</feature>
<feature type="strand" evidence="12">
    <location>
        <begin position="55"/>
        <end position="65"/>
    </location>
</feature>
<feature type="strand" evidence="12">
    <location>
        <begin position="68"/>
        <end position="77"/>
    </location>
</feature>
<feature type="helix" evidence="12">
    <location>
        <begin position="81"/>
        <end position="86"/>
    </location>
</feature>
<feature type="helix" evidence="12">
    <location>
        <begin position="87"/>
        <end position="91"/>
    </location>
</feature>
<feature type="strand" evidence="12">
    <location>
        <begin position="95"/>
        <end position="102"/>
    </location>
</feature>
<feature type="helix" evidence="12">
    <location>
        <begin position="106"/>
        <end position="122"/>
    </location>
</feature>
<feature type="strand" evidence="12">
    <location>
        <begin position="128"/>
        <end position="134"/>
    </location>
</feature>
<feature type="helix" evidence="12">
    <location>
        <begin position="139"/>
        <end position="141"/>
    </location>
</feature>
<feature type="helix" evidence="12">
    <location>
        <begin position="146"/>
        <end position="155"/>
    </location>
</feature>
<feature type="strand" evidence="12">
    <location>
        <begin position="159"/>
        <end position="162"/>
    </location>
</feature>
<feature type="turn" evidence="12">
    <location>
        <begin position="165"/>
        <end position="168"/>
    </location>
</feature>
<feature type="helix" evidence="12">
    <location>
        <begin position="171"/>
        <end position="181"/>
    </location>
</feature>
<evidence type="ECO:0000250" key="1">
    <source>
        <dbReference type="UniProtKB" id="P20339"/>
    </source>
</evidence>
<evidence type="ECO:0000256" key="2">
    <source>
        <dbReference type="SAM" id="MobiDB-lite"/>
    </source>
</evidence>
<evidence type="ECO:0000269" key="3">
    <source>
    </source>
</evidence>
<evidence type="ECO:0000269" key="4">
    <source>
    </source>
</evidence>
<evidence type="ECO:0000269" key="5">
    <source>
    </source>
</evidence>
<evidence type="ECO:0000269" key="6">
    <source>
    </source>
</evidence>
<evidence type="ECO:0000269" key="7">
    <source>
    </source>
</evidence>
<evidence type="ECO:0000269" key="8">
    <source>
    </source>
</evidence>
<evidence type="ECO:0000303" key="9">
    <source>
    </source>
</evidence>
<evidence type="ECO:0000305" key="10"/>
<evidence type="ECO:0000312" key="11">
    <source>
        <dbReference type="HGNC" id="HGNC:9785"/>
    </source>
</evidence>
<evidence type="ECO:0007829" key="12">
    <source>
        <dbReference type="PDB" id="4KYI"/>
    </source>
</evidence>
<protein>
    <recommendedName>
        <fullName>Ras-related protein Rab-5C</fullName>
        <ecNumber evidence="1">3.6.5.2</ecNumber>
    </recommendedName>
    <alternativeName>
        <fullName>L1880</fullName>
    </alternativeName>
    <alternativeName>
        <fullName>RAB5L</fullName>
    </alternativeName>
</protein>
<organism>
    <name type="scientific">Homo sapiens</name>
    <name type="common">Human</name>
    <dbReference type="NCBI Taxonomy" id="9606"/>
    <lineage>
        <taxon>Eukaryota</taxon>
        <taxon>Metazoa</taxon>
        <taxon>Chordata</taxon>
        <taxon>Craniata</taxon>
        <taxon>Vertebrata</taxon>
        <taxon>Euteleostomi</taxon>
        <taxon>Mammalia</taxon>
        <taxon>Eutheria</taxon>
        <taxon>Euarchontoglires</taxon>
        <taxon>Primates</taxon>
        <taxon>Haplorrhini</taxon>
        <taxon>Catarrhini</taxon>
        <taxon>Hominidae</taxon>
        <taxon>Homo</taxon>
    </lineage>
</organism>
<dbReference type="EC" id="3.6.5.2" evidence="1"/>
<dbReference type="EMBL" id="U18420">
    <property type="protein sequence ID" value="AAB08927.1"/>
    <property type="molecule type" value="mRNA"/>
</dbReference>
<dbReference type="EMBL" id="U11293">
    <property type="protein sequence ID" value="AAA74081.1"/>
    <property type="molecule type" value="mRNA"/>
</dbReference>
<dbReference type="EMBL" id="AF141304">
    <property type="protein sequence ID" value="AAF66594.1"/>
    <property type="molecule type" value="mRNA"/>
</dbReference>
<dbReference type="EMBL" id="AF498938">
    <property type="protein sequence ID" value="AAM21086.1"/>
    <property type="molecule type" value="mRNA"/>
</dbReference>
<dbReference type="EMBL" id="AK310234">
    <property type="status" value="NOT_ANNOTATED_CDS"/>
    <property type="molecule type" value="mRNA"/>
</dbReference>
<dbReference type="EMBL" id="CR541901">
    <property type="protein sequence ID" value="CAG46699.1"/>
    <property type="molecule type" value="mRNA"/>
</dbReference>
<dbReference type="EMBL" id="BT019484">
    <property type="protein sequence ID" value="AAV38291.1"/>
    <property type="molecule type" value="mRNA"/>
</dbReference>
<dbReference type="EMBL" id="AC003104">
    <property type="status" value="NOT_ANNOTATED_CDS"/>
    <property type="molecule type" value="Genomic_DNA"/>
</dbReference>
<dbReference type="EMBL" id="AC099811">
    <property type="status" value="NOT_ANNOTATED_CDS"/>
    <property type="molecule type" value="Genomic_DNA"/>
</dbReference>
<dbReference type="EMBL" id="AC105024">
    <property type="status" value="NOT_ANNOTATED_CDS"/>
    <property type="molecule type" value="Genomic_DNA"/>
</dbReference>
<dbReference type="EMBL" id="CH471152">
    <property type="protein sequence ID" value="EAW60805.1"/>
    <property type="molecule type" value="Genomic_DNA"/>
</dbReference>
<dbReference type="EMBL" id="BC106039">
    <property type="protein sequence ID" value="AAI06040.1"/>
    <property type="molecule type" value="mRNA"/>
</dbReference>
<dbReference type="EMBL" id="BC114439">
    <property type="protein sequence ID" value="AAI14440.1"/>
    <property type="molecule type" value="mRNA"/>
</dbReference>
<dbReference type="CCDS" id="CCDS11419.1">
    <molecule id="P51148-1"/>
</dbReference>
<dbReference type="CCDS" id="CCDS58551.1">
    <molecule id="P51148-2"/>
</dbReference>
<dbReference type="PIR" id="I38703">
    <property type="entry name" value="I38703"/>
</dbReference>
<dbReference type="RefSeq" id="NP_001238968.1">
    <molecule id="P51148-2"/>
    <property type="nucleotide sequence ID" value="NM_001252039.2"/>
</dbReference>
<dbReference type="RefSeq" id="NP_004574.2">
    <molecule id="P51148-1"/>
    <property type="nucleotide sequence ID" value="NM_004583.3"/>
</dbReference>
<dbReference type="RefSeq" id="NP_958842.1">
    <molecule id="P51148-1"/>
    <property type="nucleotide sequence ID" value="NM_201434.3"/>
</dbReference>
<dbReference type="RefSeq" id="XP_011523392.1">
    <property type="nucleotide sequence ID" value="XM_011525090.1"/>
</dbReference>
<dbReference type="RefSeq" id="XP_011523393.1">
    <property type="nucleotide sequence ID" value="XM_011525091.1"/>
</dbReference>
<dbReference type="PDB" id="4KYI">
    <property type="method" value="X-ray"/>
    <property type="resolution" value="3.08 A"/>
    <property type="chains" value="B/D/F/H=18-182"/>
</dbReference>
<dbReference type="PDBsum" id="4KYI"/>
<dbReference type="SMR" id="P51148"/>
<dbReference type="BioGRID" id="111816">
    <property type="interactions" value="612"/>
</dbReference>
<dbReference type="FunCoup" id="P51148">
    <property type="interactions" value="3340"/>
</dbReference>
<dbReference type="IntAct" id="P51148">
    <property type="interactions" value="190"/>
</dbReference>
<dbReference type="MINT" id="P51148"/>
<dbReference type="STRING" id="9606.ENSP00000447053"/>
<dbReference type="GlyGen" id="P51148">
    <property type="glycosylation" value="2 sites, 2 N-linked glycans (1 site), 1 O-linked glycan (1 site)"/>
</dbReference>
<dbReference type="iPTMnet" id="P51148"/>
<dbReference type="MetOSite" id="P51148"/>
<dbReference type="PhosphoSitePlus" id="P51148"/>
<dbReference type="SwissPalm" id="P51148"/>
<dbReference type="BioMuta" id="RAB5C"/>
<dbReference type="DMDM" id="38258923"/>
<dbReference type="jPOST" id="P51148"/>
<dbReference type="MassIVE" id="P51148"/>
<dbReference type="PaxDb" id="9606-ENSP00000447053"/>
<dbReference type="PeptideAtlas" id="P51148"/>
<dbReference type="ProteomicsDB" id="29618"/>
<dbReference type="ProteomicsDB" id="56283">
    <molecule id="P51148-1"/>
</dbReference>
<dbReference type="Pumba" id="P51148"/>
<dbReference type="TopDownProteomics" id="P51148-1">
    <molecule id="P51148-1"/>
</dbReference>
<dbReference type="Antibodypedia" id="1113">
    <property type="antibodies" value="237 antibodies from 30 providers"/>
</dbReference>
<dbReference type="DNASU" id="5878"/>
<dbReference type="Ensembl" id="ENST00000346213.9">
    <molecule id="P51148-1"/>
    <property type="protein sequence ID" value="ENSP00000345689.5"/>
    <property type="gene ID" value="ENSG00000108774.15"/>
</dbReference>
<dbReference type="Ensembl" id="ENST00000393860.7">
    <molecule id="P51148-1"/>
    <property type="protein sequence ID" value="ENSP00000377440.3"/>
    <property type="gene ID" value="ENSG00000108774.15"/>
</dbReference>
<dbReference type="Ensembl" id="ENST00000547517.5">
    <molecule id="P51148-2"/>
    <property type="protein sequence ID" value="ENSP00000447053.1"/>
    <property type="gene ID" value="ENSG00000108774.15"/>
</dbReference>
<dbReference type="GeneID" id="5878"/>
<dbReference type="KEGG" id="hsa:5878"/>
<dbReference type="MANE-Select" id="ENST00000346213.9">
    <property type="protein sequence ID" value="ENSP00000345689.5"/>
    <property type="RefSeq nucleotide sequence ID" value="NM_004583.4"/>
    <property type="RefSeq protein sequence ID" value="NP_004574.2"/>
</dbReference>
<dbReference type="UCSC" id="uc002hza.4">
    <molecule id="P51148-1"/>
    <property type="organism name" value="human"/>
</dbReference>
<dbReference type="AGR" id="HGNC:9785"/>
<dbReference type="CTD" id="5878"/>
<dbReference type="DisGeNET" id="5878"/>
<dbReference type="GeneCards" id="RAB5C"/>
<dbReference type="HGNC" id="HGNC:9785">
    <property type="gene designation" value="RAB5C"/>
</dbReference>
<dbReference type="HPA" id="ENSG00000108774">
    <property type="expression patterns" value="Low tissue specificity"/>
</dbReference>
<dbReference type="MalaCards" id="RAB5C"/>
<dbReference type="MIM" id="604037">
    <property type="type" value="gene"/>
</dbReference>
<dbReference type="neXtProt" id="NX_P51148"/>
<dbReference type="OpenTargets" id="ENSG00000108774"/>
<dbReference type="PharmGKB" id="PA34145"/>
<dbReference type="VEuPathDB" id="HostDB:ENSG00000108774"/>
<dbReference type="eggNOG" id="KOG0092">
    <property type="taxonomic scope" value="Eukaryota"/>
</dbReference>
<dbReference type="GeneTree" id="ENSGT00940000154971"/>
<dbReference type="HOGENOM" id="CLU_041217_10_2_1"/>
<dbReference type="InParanoid" id="P51148"/>
<dbReference type="OMA" id="PKNEPQC"/>
<dbReference type="OrthoDB" id="63533at2759"/>
<dbReference type="PAN-GO" id="P51148">
    <property type="GO annotations" value="8 GO annotations based on evolutionary models"/>
</dbReference>
<dbReference type="PhylomeDB" id="P51148"/>
<dbReference type="TreeFam" id="TF300199"/>
<dbReference type="PathwayCommons" id="P51148"/>
<dbReference type="Reactome" id="R-HSA-432722">
    <property type="pathway name" value="Golgi Associated Vesicle Biogenesis"/>
</dbReference>
<dbReference type="Reactome" id="R-HSA-6798695">
    <property type="pathway name" value="Neutrophil degranulation"/>
</dbReference>
<dbReference type="Reactome" id="R-HSA-8854214">
    <property type="pathway name" value="TBC/RABGAPs"/>
</dbReference>
<dbReference type="Reactome" id="R-HSA-8856828">
    <property type="pathway name" value="Clathrin-mediated endocytosis"/>
</dbReference>
<dbReference type="Reactome" id="R-HSA-8873719">
    <property type="pathway name" value="RAB geranylgeranylation"/>
</dbReference>
<dbReference type="Reactome" id="R-HSA-8876198">
    <property type="pathway name" value="RAB GEFs exchange GTP for GDP on RABs"/>
</dbReference>
<dbReference type="Reactome" id="R-HSA-9820960">
    <property type="pathway name" value="Respiratory syncytial virus (RSV) attachment and entry"/>
</dbReference>
<dbReference type="SignaLink" id="P51148"/>
<dbReference type="SIGNOR" id="P51148"/>
<dbReference type="BioGRID-ORCS" id="5878">
    <property type="hits" value="77 hits in 1173 CRISPR screens"/>
</dbReference>
<dbReference type="CD-CODE" id="FB4E32DD">
    <property type="entry name" value="Presynaptic clusters and postsynaptic densities"/>
</dbReference>
<dbReference type="ChiTaRS" id="RAB5C">
    <property type="organism name" value="human"/>
</dbReference>
<dbReference type="EvolutionaryTrace" id="P51148"/>
<dbReference type="GeneWiki" id="RAB5C"/>
<dbReference type="GenomeRNAi" id="5878"/>
<dbReference type="Pharos" id="P51148">
    <property type="development level" value="Tbio"/>
</dbReference>
<dbReference type="PRO" id="PR:P51148"/>
<dbReference type="Proteomes" id="UP000005640">
    <property type="component" value="Chromosome 17"/>
</dbReference>
<dbReference type="RNAct" id="P51148">
    <property type="molecule type" value="protein"/>
</dbReference>
<dbReference type="Bgee" id="ENSG00000108774">
    <property type="expression patterns" value="Expressed in monocyte and 206 other cell types or tissues"/>
</dbReference>
<dbReference type="ExpressionAtlas" id="P51148">
    <property type="expression patterns" value="baseline and differential"/>
</dbReference>
<dbReference type="GO" id="GO:0035577">
    <property type="term" value="C:azurophil granule membrane"/>
    <property type="evidence" value="ECO:0000304"/>
    <property type="project" value="Reactome"/>
</dbReference>
<dbReference type="GO" id="GO:0005769">
    <property type="term" value="C:early endosome"/>
    <property type="evidence" value="ECO:0000318"/>
    <property type="project" value="GO_Central"/>
</dbReference>
<dbReference type="GO" id="GO:0031901">
    <property type="term" value="C:early endosome membrane"/>
    <property type="evidence" value="ECO:0000304"/>
    <property type="project" value="Reactome"/>
</dbReference>
<dbReference type="GO" id="GO:0030139">
    <property type="term" value="C:endocytic vesicle"/>
    <property type="evidence" value="ECO:0000318"/>
    <property type="project" value="GO_Central"/>
</dbReference>
<dbReference type="GO" id="GO:0012505">
    <property type="term" value="C:endomembrane system"/>
    <property type="evidence" value="ECO:0000318"/>
    <property type="project" value="GO_Central"/>
</dbReference>
<dbReference type="GO" id="GO:0005768">
    <property type="term" value="C:endosome"/>
    <property type="evidence" value="ECO:0000314"/>
    <property type="project" value="HPA"/>
</dbReference>
<dbReference type="GO" id="GO:0070062">
    <property type="term" value="C:extracellular exosome"/>
    <property type="evidence" value="ECO:0007005"/>
    <property type="project" value="UniProtKB"/>
</dbReference>
<dbReference type="GO" id="GO:0005811">
    <property type="term" value="C:lipid droplet"/>
    <property type="evidence" value="ECO:0000314"/>
    <property type="project" value="UniProtKB"/>
</dbReference>
<dbReference type="GO" id="GO:0005765">
    <property type="term" value="C:lysosomal membrane"/>
    <property type="evidence" value="ECO:0007005"/>
    <property type="project" value="UniProtKB"/>
</dbReference>
<dbReference type="GO" id="GO:0042470">
    <property type="term" value="C:melanosome"/>
    <property type="evidence" value="ECO:0007669"/>
    <property type="project" value="UniProtKB-SubCell"/>
</dbReference>
<dbReference type="GO" id="GO:0005886">
    <property type="term" value="C:plasma membrane"/>
    <property type="evidence" value="ECO:0000318"/>
    <property type="project" value="GO_Central"/>
</dbReference>
<dbReference type="GO" id="GO:0003925">
    <property type="term" value="F:G protein activity"/>
    <property type="evidence" value="ECO:0007669"/>
    <property type="project" value="UniProtKB-EC"/>
</dbReference>
<dbReference type="GO" id="GO:0019003">
    <property type="term" value="F:GDP binding"/>
    <property type="evidence" value="ECO:0000314"/>
    <property type="project" value="UniProtKB"/>
</dbReference>
<dbReference type="GO" id="GO:0005525">
    <property type="term" value="F:GTP binding"/>
    <property type="evidence" value="ECO:0007669"/>
    <property type="project" value="UniProtKB-KW"/>
</dbReference>
<dbReference type="GO" id="GO:0003924">
    <property type="term" value="F:GTPase activity"/>
    <property type="evidence" value="ECO:0000314"/>
    <property type="project" value="UniProtKB"/>
</dbReference>
<dbReference type="GO" id="GO:0006897">
    <property type="term" value="P:endocytosis"/>
    <property type="evidence" value="ECO:0000318"/>
    <property type="project" value="GO_Central"/>
</dbReference>
<dbReference type="GO" id="GO:0007032">
    <property type="term" value="P:endosome organization"/>
    <property type="evidence" value="ECO:0007669"/>
    <property type="project" value="Ensembl"/>
</dbReference>
<dbReference type="GO" id="GO:0006886">
    <property type="term" value="P:intracellular protein transport"/>
    <property type="evidence" value="ECO:0000318"/>
    <property type="project" value="GO_Central"/>
</dbReference>
<dbReference type="GO" id="GO:0048227">
    <property type="term" value="P:plasma membrane to endosome transport"/>
    <property type="evidence" value="ECO:0000315"/>
    <property type="project" value="UniProtKB"/>
</dbReference>
<dbReference type="GO" id="GO:0030100">
    <property type="term" value="P:regulation of endocytosis"/>
    <property type="evidence" value="ECO:0007669"/>
    <property type="project" value="Ensembl"/>
</dbReference>
<dbReference type="CDD" id="cd01860">
    <property type="entry name" value="Rab5_related"/>
    <property type="match status" value="1"/>
</dbReference>
<dbReference type="FunFam" id="3.40.50.300:FF:000180">
    <property type="entry name" value="Member RAS oncogene family"/>
    <property type="match status" value="1"/>
</dbReference>
<dbReference type="Gene3D" id="3.40.50.300">
    <property type="entry name" value="P-loop containing nucleotide triphosphate hydrolases"/>
    <property type="match status" value="1"/>
</dbReference>
<dbReference type="InterPro" id="IPR027417">
    <property type="entry name" value="P-loop_NTPase"/>
</dbReference>
<dbReference type="InterPro" id="IPR005225">
    <property type="entry name" value="Small_GTP-bd"/>
</dbReference>
<dbReference type="InterPro" id="IPR001806">
    <property type="entry name" value="Small_GTPase"/>
</dbReference>
<dbReference type="NCBIfam" id="TIGR00231">
    <property type="entry name" value="small_GTP"/>
    <property type="match status" value="1"/>
</dbReference>
<dbReference type="PANTHER" id="PTHR47978">
    <property type="match status" value="1"/>
</dbReference>
<dbReference type="Pfam" id="PF00071">
    <property type="entry name" value="Ras"/>
    <property type="match status" value="1"/>
</dbReference>
<dbReference type="PRINTS" id="PR00449">
    <property type="entry name" value="RASTRNSFRMNG"/>
</dbReference>
<dbReference type="SMART" id="SM00175">
    <property type="entry name" value="RAB"/>
    <property type="match status" value="1"/>
</dbReference>
<dbReference type="SMART" id="SM00176">
    <property type="entry name" value="RAN"/>
    <property type="match status" value="1"/>
</dbReference>
<dbReference type="SMART" id="SM00173">
    <property type="entry name" value="RAS"/>
    <property type="match status" value="1"/>
</dbReference>
<dbReference type="SMART" id="SM00174">
    <property type="entry name" value="RHO"/>
    <property type="match status" value="1"/>
</dbReference>
<dbReference type="SUPFAM" id="SSF52540">
    <property type="entry name" value="P-loop containing nucleoside triphosphate hydrolases"/>
    <property type="match status" value="1"/>
</dbReference>
<dbReference type="PROSITE" id="PS51419">
    <property type="entry name" value="RAB"/>
    <property type="match status" value="1"/>
</dbReference>